<accession>Q5E6X3</accession>
<protein>
    <recommendedName>
        <fullName evidence="1">Na(+)-translocating NADH-quinone reductase subunit D</fullName>
        <shortName evidence="1">Na(+)-NQR subunit D</shortName>
        <shortName evidence="1">Na(+)-translocating NQR subunit D</shortName>
        <ecNumber evidence="1">7.2.1.1</ecNumber>
    </recommendedName>
    <alternativeName>
        <fullName evidence="1">NQR complex subunit D</fullName>
    </alternativeName>
    <alternativeName>
        <fullName evidence="1">NQR-1 subunit D</fullName>
    </alternativeName>
</protein>
<proteinExistence type="inferred from homology"/>
<reference key="1">
    <citation type="journal article" date="2005" name="Proc. Natl. Acad. Sci. U.S.A.">
        <title>Complete genome sequence of Vibrio fischeri: a symbiotic bacterium with pathogenic congeners.</title>
        <authorList>
            <person name="Ruby E.G."/>
            <person name="Urbanowski M."/>
            <person name="Campbell J."/>
            <person name="Dunn A."/>
            <person name="Faini M."/>
            <person name="Gunsalus R."/>
            <person name="Lostroh P."/>
            <person name="Lupp C."/>
            <person name="McCann J."/>
            <person name="Millikan D."/>
            <person name="Schaefer A."/>
            <person name="Stabb E."/>
            <person name="Stevens A."/>
            <person name="Visick K."/>
            <person name="Whistler C."/>
            <person name="Greenberg E.P."/>
        </authorList>
    </citation>
    <scope>NUCLEOTIDE SEQUENCE [LARGE SCALE GENOMIC DNA]</scope>
    <source>
        <strain>ATCC 700601 / ES114</strain>
    </source>
</reference>
<dbReference type="EC" id="7.2.1.1" evidence="1"/>
<dbReference type="EMBL" id="CP000020">
    <property type="protein sequence ID" value="AAW85223.1"/>
    <property type="molecule type" value="Genomic_DNA"/>
</dbReference>
<dbReference type="RefSeq" id="WP_005418135.1">
    <property type="nucleotide sequence ID" value="NZ_CAWLES010000001.1"/>
</dbReference>
<dbReference type="RefSeq" id="YP_204111.1">
    <property type="nucleotide sequence ID" value="NC_006840.2"/>
</dbReference>
<dbReference type="SMR" id="Q5E6X3"/>
<dbReference type="STRING" id="312309.VF_0728"/>
<dbReference type="EnsemblBacteria" id="AAW85223">
    <property type="protein sequence ID" value="AAW85223"/>
    <property type="gene ID" value="VF_0728"/>
</dbReference>
<dbReference type="GeneID" id="54163383"/>
<dbReference type="KEGG" id="vfi:VF_0728"/>
<dbReference type="PATRIC" id="fig|312309.11.peg.722"/>
<dbReference type="eggNOG" id="COG1347">
    <property type="taxonomic scope" value="Bacteria"/>
</dbReference>
<dbReference type="HOGENOM" id="CLU_046659_1_1_6"/>
<dbReference type="OrthoDB" id="9782945at2"/>
<dbReference type="Proteomes" id="UP000000537">
    <property type="component" value="Chromosome I"/>
</dbReference>
<dbReference type="GO" id="GO:0005886">
    <property type="term" value="C:plasma membrane"/>
    <property type="evidence" value="ECO:0007669"/>
    <property type="project" value="UniProtKB-SubCell"/>
</dbReference>
<dbReference type="GO" id="GO:0016655">
    <property type="term" value="F:oxidoreductase activity, acting on NAD(P)H, quinone or similar compound as acceptor"/>
    <property type="evidence" value="ECO:0007669"/>
    <property type="project" value="UniProtKB-UniRule"/>
</dbReference>
<dbReference type="GO" id="GO:0006814">
    <property type="term" value="P:sodium ion transport"/>
    <property type="evidence" value="ECO:0007669"/>
    <property type="project" value="UniProtKB-UniRule"/>
</dbReference>
<dbReference type="HAMAP" id="MF_00428">
    <property type="entry name" value="NqrD"/>
    <property type="match status" value="1"/>
</dbReference>
<dbReference type="InterPro" id="IPR011292">
    <property type="entry name" value="NqrD"/>
</dbReference>
<dbReference type="InterPro" id="IPR003667">
    <property type="entry name" value="NqrDE/RnfAE"/>
</dbReference>
<dbReference type="NCBIfam" id="TIGR01939">
    <property type="entry name" value="nqrD"/>
    <property type="match status" value="1"/>
</dbReference>
<dbReference type="NCBIfam" id="NF006777">
    <property type="entry name" value="PRK09292.1"/>
    <property type="match status" value="1"/>
</dbReference>
<dbReference type="NCBIfam" id="NF009070">
    <property type="entry name" value="PRK12405.1"/>
    <property type="match status" value="1"/>
</dbReference>
<dbReference type="PANTHER" id="PTHR30586">
    <property type="entry name" value="ELECTRON TRANSPORT COMPLEX PROTEIN RNFE"/>
    <property type="match status" value="1"/>
</dbReference>
<dbReference type="PANTHER" id="PTHR30586:SF1">
    <property type="entry name" value="NA(+)-TRANSLOCATING NADH-QUINONE REDUCTASE SUBUNIT D"/>
    <property type="match status" value="1"/>
</dbReference>
<dbReference type="Pfam" id="PF02508">
    <property type="entry name" value="Rnf-Nqr"/>
    <property type="match status" value="1"/>
</dbReference>
<dbReference type="PIRSF" id="PIRSF006102">
    <property type="entry name" value="NQR_DE"/>
    <property type="match status" value="1"/>
</dbReference>
<gene>
    <name evidence="1" type="primary">nqrD</name>
    <name type="ordered locus">VF_0728</name>
</gene>
<feature type="chain" id="PRO_1000060176" description="Na(+)-translocating NADH-quinone reductase subunit D">
    <location>
        <begin position="1"/>
        <end position="210"/>
    </location>
</feature>
<feature type="transmembrane region" description="Helical" evidence="1">
    <location>
        <begin position="42"/>
        <end position="62"/>
    </location>
</feature>
<feature type="transmembrane region" description="Helical" evidence="1">
    <location>
        <begin position="72"/>
        <end position="92"/>
    </location>
</feature>
<feature type="transmembrane region" description="Helical" evidence="1">
    <location>
        <begin position="103"/>
        <end position="123"/>
    </location>
</feature>
<feature type="transmembrane region" description="Helical" evidence="1">
    <location>
        <begin position="131"/>
        <end position="151"/>
    </location>
</feature>
<feature type="transmembrane region" description="Helical" evidence="1">
    <location>
        <begin position="178"/>
        <end position="198"/>
    </location>
</feature>
<name>NQRD_ALIF1</name>
<evidence type="ECO:0000255" key="1">
    <source>
        <dbReference type="HAMAP-Rule" id="MF_00428"/>
    </source>
</evidence>
<keyword id="KW-0997">Cell inner membrane</keyword>
<keyword id="KW-1003">Cell membrane</keyword>
<keyword id="KW-0406">Ion transport</keyword>
<keyword id="KW-0472">Membrane</keyword>
<keyword id="KW-0520">NAD</keyword>
<keyword id="KW-1185">Reference proteome</keyword>
<keyword id="KW-0915">Sodium</keyword>
<keyword id="KW-0739">Sodium transport</keyword>
<keyword id="KW-1278">Translocase</keyword>
<keyword id="KW-0812">Transmembrane</keyword>
<keyword id="KW-1133">Transmembrane helix</keyword>
<keyword id="KW-0813">Transport</keyword>
<keyword id="KW-0830">Ubiquinone</keyword>
<organism>
    <name type="scientific">Aliivibrio fischeri (strain ATCC 700601 / ES114)</name>
    <name type="common">Vibrio fischeri</name>
    <dbReference type="NCBI Taxonomy" id="312309"/>
    <lineage>
        <taxon>Bacteria</taxon>
        <taxon>Pseudomonadati</taxon>
        <taxon>Pseudomonadota</taxon>
        <taxon>Gammaproteobacteria</taxon>
        <taxon>Vibrionales</taxon>
        <taxon>Vibrionaceae</taxon>
        <taxon>Aliivibrio</taxon>
    </lineage>
</organism>
<sequence>MASAKDIKKSILAPVLDNNPIALQVLGVCSALAVTTKLETAFVMTLAVMFVTALSNLFVSLIRNHMPNSVRIIVQMAIIASLVIVVDQVLKAYLYDISKQLSVFVSLIITNCIVMGRAEAFAMKSAPFPSFIDGIGNGLGYGFVLMTVAFFRELLGSGKLFGVEVLPLVSNGGWYQPNGLMLLAPSAFFLIGFMIWAIRILKPEQVEAKE</sequence>
<comment type="function">
    <text evidence="1">NQR complex catalyzes the reduction of ubiquinone-1 to ubiquinol by two successive reactions, coupled with the transport of Na(+) ions from the cytoplasm to the periplasm. NqrA to NqrE are probably involved in the second step, the conversion of ubisemiquinone to ubiquinol.</text>
</comment>
<comment type="catalytic activity">
    <reaction evidence="1">
        <text>a ubiquinone + n Na(+)(in) + NADH + H(+) = a ubiquinol + n Na(+)(out) + NAD(+)</text>
        <dbReference type="Rhea" id="RHEA:47748"/>
        <dbReference type="Rhea" id="RHEA-COMP:9565"/>
        <dbReference type="Rhea" id="RHEA-COMP:9566"/>
        <dbReference type="ChEBI" id="CHEBI:15378"/>
        <dbReference type="ChEBI" id="CHEBI:16389"/>
        <dbReference type="ChEBI" id="CHEBI:17976"/>
        <dbReference type="ChEBI" id="CHEBI:29101"/>
        <dbReference type="ChEBI" id="CHEBI:57540"/>
        <dbReference type="ChEBI" id="CHEBI:57945"/>
        <dbReference type="EC" id="7.2.1.1"/>
    </reaction>
</comment>
<comment type="subunit">
    <text evidence="1">Composed of six subunits; NqrA, NqrB, NqrC, NqrD, NqrE and NqrF.</text>
</comment>
<comment type="subcellular location">
    <subcellularLocation>
        <location evidence="1">Cell inner membrane</location>
        <topology evidence="1">Multi-pass membrane protein</topology>
    </subcellularLocation>
</comment>
<comment type="similarity">
    <text evidence="1">Belongs to the NqrDE/RnfAE family.</text>
</comment>